<sequence length="439" mass="49574">MDICSRNKKLTIRRPAILVALALLLCSCKSTPPESMVTPPAGSKPPATTQQSSQPMRGIWLATVSRLDWPPVSSVNISNPTSRARVQQQAMIDKLDHLQRLGINTVFFQVKPDGTALWPSKILPWSDLMTGKIGENPGYDPLQFMLDEAHKRGMKVHAWFNPYRVSVNTKPGTIRELNSTLSQQPASVYVQHRDWIRTSGDRFVLDPGIPEVQDWITSIVAEVVSRYPVDGVQFDDYFYTESPGSRLNDNETYRKYGGAFASKADWRRNNTQQLIAKVSHTIKSIKPGVEFGVSPAGVWRNRSHDPLGSDTRGAAAYDESYADTRRWVEQGLLDYIAPQIYWPFSRSAARYDVLAKWWADVVKPTRTRLYIGIAFYKVGEPSKIEPDWMINGGVPELKKQLDLNDAVPEISGTILFREDYLNKPQTQQAVSYLQSRWGS</sequence>
<protein>
    <recommendedName>
        <fullName evidence="5">Glycosyl hydrolase DigH</fullName>
        <ecNumber evidence="3">3.2.1.-</ecNumber>
    </recommendedName>
    <alternativeName>
        <fullName evidence="4">Divisome-localized glycosyl hydrolase</fullName>
    </alternativeName>
</protein>
<organism>
    <name type="scientific">Escherichia coli (strain K12)</name>
    <dbReference type="NCBI Taxonomy" id="83333"/>
    <lineage>
        <taxon>Bacteria</taxon>
        <taxon>Pseudomonadati</taxon>
        <taxon>Pseudomonadota</taxon>
        <taxon>Gammaproteobacteria</taxon>
        <taxon>Enterobacterales</taxon>
        <taxon>Enterobacteriaceae</taxon>
        <taxon>Escherichia</taxon>
    </lineage>
</organism>
<proteinExistence type="evidence at protein level"/>
<evidence type="ECO:0000255" key="1">
    <source>
        <dbReference type="PROSITE-ProRule" id="PRU00303"/>
    </source>
</evidence>
<evidence type="ECO:0000256" key="2">
    <source>
        <dbReference type="SAM" id="MobiDB-lite"/>
    </source>
</evidence>
<evidence type="ECO:0000269" key="3">
    <source>
    </source>
</evidence>
<evidence type="ECO:0000303" key="4">
    <source>
    </source>
</evidence>
<evidence type="ECO:0000305" key="5"/>
<accession>P64426</accession>
<accession>P76130</accession>
<accession>Q2MBA2</accession>
<comment type="function">
    <text evidence="3">Divisome-localized glycosyl hydrolase that cleaves peptide-free (denuded) peptidoglycans. Has either glucosaminidase or muramidase activity.</text>
</comment>
<comment type="subcellular location">
    <subcellularLocation>
        <location evidence="3">Cell outer membrane</location>
        <topology evidence="1">Lipid-anchor</topology>
    </subcellularLocation>
    <text evidence="3">Localizes to the divisome.</text>
</comment>
<comment type="miscellaneous">
    <text evidence="3">Overexpression suppresses the chaining phenotype of the tol-pal mutant.</text>
</comment>
<comment type="similarity">
    <text evidence="5">Belongs to the glycosyl hydrolase-like 10 (GHL10) family.</text>
</comment>
<keyword id="KW-0998">Cell outer membrane</keyword>
<keyword id="KW-0961">Cell wall biogenesis/degradation</keyword>
<keyword id="KW-0326">Glycosidase</keyword>
<keyword id="KW-0378">Hydrolase</keyword>
<keyword id="KW-0449">Lipoprotein</keyword>
<keyword id="KW-0472">Membrane</keyword>
<keyword id="KW-0564">Palmitate</keyword>
<keyword id="KW-1185">Reference proteome</keyword>
<keyword id="KW-0732">Signal</keyword>
<gene>
    <name evidence="4" type="primary">digH</name>
    <name type="synonym">yddW</name>
    <name type="ordered locus">b1491</name>
    <name type="ordered locus">JW1486</name>
</gene>
<reference key="1">
    <citation type="journal article" date="1997" name="Science">
        <title>The complete genome sequence of Escherichia coli K-12.</title>
        <authorList>
            <person name="Blattner F.R."/>
            <person name="Plunkett G. III"/>
            <person name="Bloch C.A."/>
            <person name="Perna N.T."/>
            <person name="Burland V."/>
            <person name="Riley M."/>
            <person name="Collado-Vides J."/>
            <person name="Glasner J.D."/>
            <person name="Rode C.K."/>
            <person name="Mayhew G.F."/>
            <person name="Gregor J."/>
            <person name="Davis N.W."/>
            <person name="Kirkpatrick H.A."/>
            <person name="Goeden M.A."/>
            <person name="Rose D.J."/>
            <person name="Mau B."/>
            <person name="Shao Y."/>
        </authorList>
    </citation>
    <scope>NUCLEOTIDE SEQUENCE [LARGE SCALE GENOMIC DNA]</scope>
    <source>
        <strain>K12 / MG1655 / ATCC 47076</strain>
    </source>
</reference>
<reference key="2">
    <citation type="journal article" date="2006" name="Mol. Syst. Biol.">
        <title>Highly accurate genome sequences of Escherichia coli K-12 strains MG1655 and W3110.</title>
        <authorList>
            <person name="Hayashi K."/>
            <person name="Morooka N."/>
            <person name="Yamamoto Y."/>
            <person name="Fujita K."/>
            <person name="Isono K."/>
            <person name="Choi S."/>
            <person name="Ohtsubo E."/>
            <person name="Baba T."/>
            <person name="Wanner B.L."/>
            <person name="Mori H."/>
            <person name="Horiuchi T."/>
        </authorList>
    </citation>
    <scope>NUCLEOTIDE SEQUENCE [LARGE SCALE GENOMIC DNA]</scope>
    <source>
        <strain>K12 / W3110 / ATCC 27325 / DSM 5911</strain>
    </source>
</reference>
<reference key="3">
    <citation type="journal article" date="2020" name="Proc. Natl. Acad. Sci. U.S.A.">
        <title>The Tol-Pal system is required for peptidoglycan-cleaving enzymes to complete bacterial cell division.</title>
        <authorList>
            <person name="Yakhnina A.A."/>
            <person name="Bernhardt T.G."/>
        </authorList>
    </citation>
    <scope>FUNCTION</scope>
    <scope>OVEREXPRESSION</scope>
    <scope>SUBCELLULAR LOCATION</scope>
    <scope>MUTAGENESIS OF ASP-236</scope>
</reference>
<dbReference type="EC" id="3.2.1.-" evidence="3"/>
<dbReference type="EMBL" id="U00096">
    <property type="protein sequence ID" value="AAC74564.1"/>
    <property type="molecule type" value="Genomic_DNA"/>
</dbReference>
<dbReference type="EMBL" id="AP009048">
    <property type="protein sequence ID" value="BAE76454.1"/>
    <property type="molecule type" value="Genomic_DNA"/>
</dbReference>
<dbReference type="PIR" id="F64902">
    <property type="entry name" value="F64902"/>
</dbReference>
<dbReference type="RefSeq" id="NP_416008.1">
    <property type="nucleotide sequence ID" value="NC_000913.3"/>
</dbReference>
<dbReference type="RefSeq" id="WP_000350395.1">
    <property type="nucleotide sequence ID" value="NZ_STEB01000054.1"/>
</dbReference>
<dbReference type="SMR" id="P64426"/>
<dbReference type="BioGRID" id="4263004">
    <property type="interactions" value="205"/>
</dbReference>
<dbReference type="DIP" id="DIP-48187N"/>
<dbReference type="FunCoup" id="P64426">
    <property type="interactions" value="87"/>
</dbReference>
<dbReference type="IntAct" id="P64426">
    <property type="interactions" value="2"/>
</dbReference>
<dbReference type="STRING" id="511145.b1491"/>
<dbReference type="PaxDb" id="511145-b1491"/>
<dbReference type="EnsemblBacteria" id="AAC74564">
    <property type="protein sequence ID" value="AAC74564"/>
    <property type="gene ID" value="b1491"/>
</dbReference>
<dbReference type="GeneID" id="945975"/>
<dbReference type="KEGG" id="ecj:JW1486"/>
<dbReference type="KEGG" id="eco:b1491"/>
<dbReference type="PATRIC" id="fig|1411691.4.peg.776"/>
<dbReference type="EchoBASE" id="EB3555"/>
<dbReference type="eggNOG" id="COG1649">
    <property type="taxonomic scope" value="Bacteria"/>
</dbReference>
<dbReference type="HOGENOM" id="CLU_019247_0_1_6"/>
<dbReference type="InParanoid" id="P64426"/>
<dbReference type="OMA" id="RITMNHT"/>
<dbReference type="OrthoDB" id="9773203at2"/>
<dbReference type="PhylomeDB" id="P64426"/>
<dbReference type="BioCyc" id="EcoCyc:G6785-MONOMER"/>
<dbReference type="PRO" id="PR:P64426"/>
<dbReference type="Proteomes" id="UP000000625">
    <property type="component" value="Chromosome"/>
</dbReference>
<dbReference type="GO" id="GO:0009279">
    <property type="term" value="C:cell outer membrane"/>
    <property type="evidence" value="ECO:0000314"/>
    <property type="project" value="EcoCyc"/>
</dbReference>
<dbReference type="GO" id="GO:0016798">
    <property type="term" value="F:hydrolase activity, acting on glycosyl bonds"/>
    <property type="evidence" value="ECO:0007669"/>
    <property type="project" value="UniProtKB-KW"/>
</dbReference>
<dbReference type="GO" id="GO:0071555">
    <property type="term" value="P:cell wall organization"/>
    <property type="evidence" value="ECO:0007669"/>
    <property type="project" value="UniProtKB-KW"/>
</dbReference>
<dbReference type="CDD" id="cd00551">
    <property type="entry name" value="AmyAc_family"/>
    <property type="match status" value="1"/>
</dbReference>
<dbReference type="Gene3D" id="3.20.20.80">
    <property type="entry name" value="Glycosidases"/>
    <property type="match status" value="1"/>
</dbReference>
<dbReference type="InterPro" id="IPR052177">
    <property type="entry name" value="Divisome_Glycosyl_Hydrolase"/>
</dbReference>
<dbReference type="InterPro" id="IPR003790">
    <property type="entry name" value="GHL10"/>
</dbReference>
<dbReference type="InterPro" id="IPR017853">
    <property type="entry name" value="Glycoside_hydrolase_SF"/>
</dbReference>
<dbReference type="PANTHER" id="PTHR43405">
    <property type="entry name" value="GLYCOSYL HYDROLASE DIGH"/>
    <property type="match status" value="1"/>
</dbReference>
<dbReference type="PANTHER" id="PTHR43405:SF1">
    <property type="entry name" value="GLYCOSYL HYDROLASE DIGH"/>
    <property type="match status" value="1"/>
</dbReference>
<dbReference type="Pfam" id="PF02638">
    <property type="entry name" value="GHL10"/>
    <property type="match status" value="1"/>
</dbReference>
<dbReference type="SUPFAM" id="SSF51445">
    <property type="entry name" value="(Trans)glycosidases"/>
    <property type="match status" value="1"/>
</dbReference>
<dbReference type="PROSITE" id="PS51257">
    <property type="entry name" value="PROKAR_LIPOPROTEIN"/>
    <property type="match status" value="1"/>
</dbReference>
<name>DIGH_ECOLI</name>
<feature type="signal peptide" evidence="1">
    <location>
        <begin position="1"/>
        <end position="27"/>
    </location>
</feature>
<feature type="chain" id="PRO_0000013767" description="Glycosyl hydrolase DigH">
    <location>
        <begin position="28"/>
        <end position="439"/>
    </location>
</feature>
<feature type="region of interest" description="Disordered" evidence="2">
    <location>
        <begin position="34"/>
        <end position="54"/>
    </location>
</feature>
<feature type="lipid moiety-binding region" description="N-palmitoyl cysteine" evidence="1">
    <location>
        <position position="28"/>
    </location>
</feature>
<feature type="lipid moiety-binding region" description="S-diacylglycerol cysteine" evidence="1">
    <location>
        <position position="28"/>
    </location>
</feature>
<feature type="mutagenesis site" description="Fails to enhance peptidoglycan cleavage in combination with AmiD." evidence="3">
    <original>D</original>
    <variation>N</variation>
    <location>
        <position position="236"/>
    </location>
</feature>